<comment type="function">
    <text evidence="2">Part of an ABC transporter complex involved in ferric-petrobactin uptake. Probably responsible for the translocation of the substrate across the membrane.</text>
</comment>
<comment type="subunit">
    <text evidence="5">The complex is composed of two ATP-binding proteins (FatE), two transmembrane proteins (FatC and FatD) and a solute-binding protein (FpuA).</text>
</comment>
<comment type="subcellular location">
    <subcellularLocation>
        <location evidence="5">Cell membrane</location>
        <topology evidence="1">Multi-pass membrane protein</topology>
    </subcellularLocation>
</comment>
<comment type="disruption phenotype">
    <text evidence="2">A mutant lacking both fpuB and fatCD permeases is incapable of using petrobactin as an iron source and exhibits attenuated virulence in a murine model of inhalational anthrax infection.</text>
</comment>
<comment type="similarity">
    <text evidence="4">Belongs to the binding-protein-dependent transport system permease family. FecCD subfamily.</text>
</comment>
<evidence type="ECO:0000255" key="1"/>
<evidence type="ECO:0000269" key="2">
    <source>
    </source>
</evidence>
<evidence type="ECO:0000303" key="3">
    <source>
    </source>
</evidence>
<evidence type="ECO:0000305" key="4"/>
<evidence type="ECO:0000305" key="5">
    <source>
    </source>
</evidence>
<evidence type="ECO:0000312" key="6">
    <source>
        <dbReference type="EMBL" id="AAT34462.1"/>
    </source>
</evidence>
<name>FATD_BACAN</name>
<dbReference type="EMBL" id="AE017334">
    <property type="protein sequence ID" value="AAT34462.1"/>
    <property type="molecule type" value="Genomic_DNA"/>
</dbReference>
<dbReference type="SMR" id="Q81XB1"/>
<dbReference type="STRING" id="261594.GBAA_5329"/>
<dbReference type="DNASU" id="1084833"/>
<dbReference type="KEGG" id="bar:GBAA_5329"/>
<dbReference type="HOGENOM" id="CLU_013016_3_0_9"/>
<dbReference type="Proteomes" id="UP000000594">
    <property type="component" value="Chromosome"/>
</dbReference>
<dbReference type="GO" id="GO:0005886">
    <property type="term" value="C:plasma membrane"/>
    <property type="evidence" value="ECO:0007669"/>
    <property type="project" value="UniProtKB-SubCell"/>
</dbReference>
<dbReference type="GO" id="GO:0022857">
    <property type="term" value="F:transmembrane transporter activity"/>
    <property type="evidence" value="ECO:0007669"/>
    <property type="project" value="InterPro"/>
</dbReference>
<dbReference type="GO" id="GO:0033214">
    <property type="term" value="P:siderophore-dependent iron import into cell"/>
    <property type="evidence" value="ECO:0007669"/>
    <property type="project" value="TreeGrafter"/>
</dbReference>
<dbReference type="CDD" id="cd06550">
    <property type="entry name" value="TM_ABC_iron-siderophores_like"/>
    <property type="match status" value="1"/>
</dbReference>
<dbReference type="FunFam" id="1.10.3470.10:FF:000004">
    <property type="entry name" value="Iron compound ABC transporter, permease"/>
    <property type="match status" value="1"/>
</dbReference>
<dbReference type="Gene3D" id="1.10.3470.10">
    <property type="entry name" value="ABC transporter involved in vitamin B12 uptake, BtuC"/>
    <property type="match status" value="1"/>
</dbReference>
<dbReference type="InterPro" id="IPR037294">
    <property type="entry name" value="ABC_BtuC-like"/>
</dbReference>
<dbReference type="InterPro" id="IPR000522">
    <property type="entry name" value="ABC_transptr_permease_BtuC"/>
</dbReference>
<dbReference type="PANTHER" id="PTHR30472">
    <property type="entry name" value="FERRIC ENTEROBACTIN TRANSPORT SYSTEM PERMEASE PROTEIN"/>
    <property type="match status" value="1"/>
</dbReference>
<dbReference type="PANTHER" id="PTHR30472:SF27">
    <property type="entry name" value="PETROBACTIN IMPORT SYSTEM PERMEASE PROTEIN YCLN"/>
    <property type="match status" value="1"/>
</dbReference>
<dbReference type="Pfam" id="PF01032">
    <property type="entry name" value="FecCD"/>
    <property type="match status" value="1"/>
</dbReference>
<dbReference type="SUPFAM" id="SSF81345">
    <property type="entry name" value="ABC transporter involved in vitamin B12 uptake, BtuC"/>
    <property type="match status" value="1"/>
</dbReference>
<feature type="chain" id="PRO_0000443815" description="Petrobactin import system permease protein FatD">
    <location>
        <begin position="1"/>
        <end position="334"/>
    </location>
</feature>
<feature type="transmembrane region" description="Helical" evidence="1">
    <location>
        <begin position="24"/>
        <end position="44"/>
    </location>
</feature>
<feature type="transmembrane region" description="Helical" evidence="1">
    <location>
        <begin position="64"/>
        <end position="84"/>
    </location>
</feature>
<feature type="transmembrane region" description="Helical" evidence="1">
    <location>
        <begin position="98"/>
        <end position="118"/>
    </location>
</feature>
<feature type="transmembrane region" description="Helical" evidence="1">
    <location>
        <begin position="119"/>
        <end position="139"/>
    </location>
</feature>
<feature type="transmembrane region" description="Helical" evidence="1">
    <location>
        <begin position="152"/>
        <end position="172"/>
    </location>
</feature>
<feature type="transmembrane region" description="Helical" evidence="1">
    <location>
        <begin position="197"/>
        <end position="217"/>
    </location>
</feature>
<feature type="transmembrane region" description="Helical" evidence="1">
    <location>
        <begin position="234"/>
        <end position="254"/>
    </location>
</feature>
<feature type="transmembrane region" description="Helical" evidence="1">
    <location>
        <begin position="277"/>
        <end position="297"/>
    </location>
</feature>
<feature type="transmembrane region" description="Helical" evidence="1">
    <location>
        <begin position="304"/>
        <end position="324"/>
    </location>
</feature>
<sequence length="334" mass="37020">MISRVENISQPQFYNHNKIWTKPFIIAIIVVIILGIISLFTGVYDIRGQEDGMEMFFITRVPRTVALMLTGAAMAMAGLVMQLITQNRFVEPTTTGTIEWSSLGLLFVYLLFPAPTLVQRMTGAIIFSFIGTMIFFLFLRRVKLRSSLIVPIIGLMLGAVISAVSTFLGLLFQMTQSIETWFVGSFANIQVGRYEYLWLIVIVTLLIFMYANRLTLAGLGEDVATSLGVNYNRIVLFGTALISVAVGIVAAVIGNLPFLGLIVPNIVSMFRGDDLRSNLPWVCVIGMGTITACDIISRTIIKPFELPVSLILASVGAVVFITILLRKRKPRRLR</sequence>
<proteinExistence type="evidence at protein level"/>
<reference key="1">
    <citation type="journal article" date="2009" name="J. Bacteriol.">
        <title>The complete genome sequence of Bacillus anthracis Ames 'Ancestor'.</title>
        <authorList>
            <person name="Ravel J."/>
            <person name="Jiang L."/>
            <person name="Stanley S.T."/>
            <person name="Wilson M.R."/>
            <person name="Decker R.S."/>
            <person name="Read T.D."/>
            <person name="Worsham P."/>
            <person name="Keim P.S."/>
            <person name="Salzberg S.L."/>
            <person name="Fraser-Liggett C.M."/>
            <person name="Rasko D.A."/>
        </authorList>
    </citation>
    <scope>NUCLEOTIDE SEQUENCE [LARGE SCALE GENOMIC DNA]</scope>
    <source>
        <strain>Ames ancestor</strain>
    </source>
</reference>
<reference key="2">
    <citation type="journal article" date="2012" name="Mol. Microbiol.">
        <title>Multiple ABC transporters are involved in the acquisition of petrobactin in Bacillus anthracis.</title>
        <authorList>
            <person name="Dixon S.D."/>
            <person name="Janes B.K."/>
            <person name="Bourgis A."/>
            <person name="Carlson P.E. Jr."/>
            <person name="Hanna P.C."/>
        </authorList>
    </citation>
    <scope>FUNCTION</scope>
    <scope>SUBUNIT</scope>
    <scope>SUBCELLULAR LOCATION</scope>
    <scope>DISRUPTION PHENOTYPE</scope>
    <source>
        <strain>Sterne</strain>
    </source>
</reference>
<keyword id="KW-1003">Cell membrane</keyword>
<keyword id="KW-0406">Ion transport</keyword>
<keyword id="KW-0408">Iron</keyword>
<keyword id="KW-0410">Iron transport</keyword>
<keyword id="KW-0472">Membrane</keyword>
<keyword id="KW-1185">Reference proteome</keyword>
<keyword id="KW-0812">Transmembrane</keyword>
<keyword id="KW-1133">Transmembrane helix</keyword>
<keyword id="KW-0813">Transport</keyword>
<gene>
    <name evidence="3" type="primary">fatD</name>
    <name evidence="6" type="ordered locus">GBAA_5329</name>
</gene>
<accession>Q81XB1</accession>
<accession>E9R967</accession>
<accession>Q6KKG3</accession>
<protein>
    <recommendedName>
        <fullName evidence="4">Petrobactin import system permease protein FatD</fullName>
    </recommendedName>
</protein>
<organism>
    <name type="scientific">Bacillus anthracis</name>
    <dbReference type="NCBI Taxonomy" id="1392"/>
    <lineage>
        <taxon>Bacteria</taxon>
        <taxon>Bacillati</taxon>
        <taxon>Bacillota</taxon>
        <taxon>Bacilli</taxon>
        <taxon>Bacillales</taxon>
        <taxon>Bacillaceae</taxon>
        <taxon>Bacillus</taxon>
        <taxon>Bacillus cereus group</taxon>
    </lineage>
</organism>